<keyword id="KW-0067">ATP-binding</keyword>
<keyword id="KW-0963">Cytoplasm</keyword>
<keyword id="KW-1015">Disulfide bond</keyword>
<keyword id="KW-0547">Nucleotide-binding</keyword>
<keyword id="KW-0694">RNA-binding</keyword>
<keyword id="KW-0808">Transferase</keyword>
<keyword id="KW-0819">tRNA processing</keyword>
<keyword id="KW-0820">tRNA-binding</keyword>
<protein>
    <recommendedName>
        <fullName evidence="1">tRNA-specific 2-thiouridylase MnmA</fullName>
        <ecNumber evidence="1">2.8.1.13</ecNumber>
    </recommendedName>
</protein>
<sequence length="383" mass="42132">MAVGSTTTRAGEAALERLRQWPGEHRVAIGLSGGVDSSLTAALLVEAGWEVEGLTLWLMSGKGACCAEGLVDAAGICEQLGIPHHVVDMRETFQQEIVQRLVDGYRDGITPLPCSQCNRSVKFGPMLDWALQERKLPRIATGHYARIRHGGDRGRHQLLRGLDTRKDQSYFLYDLPQEVLGRIVFPLGELTKPDTRLEAARHGLRTAEKPESQDLCLADHHGSMRAFLDAYLPPRQGEIVLADGTVVGEHDGIEHFTVGQRKGLGVAWGEPLHVIRLDAAMNRVVVAPRAEAGRDSCVVGAVNWVSIDPIEAPRTVEVQVRYRSTPVRAELSPLPAIEADQQRERPHRCRLSFEEEQFSITPGQAAVFYDGETVLGGGLIQRE</sequence>
<feature type="chain" id="PRO_0000349827" description="tRNA-specific 2-thiouridylase MnmA">
    <location>
        <begin position="1"/>
        <end position="383"/>
    </location>
</feature>
<feature type="region of interest" description="Interaction with tRNA" evidence="1">
    <location>
        <begin position="166"/>
        <end position="168"/>
    </location>
</feature>
<feature type="region of interest" description="Interaction with tRNA" evidence="1">
    <location>
        <begin position="321"/>
        <end position="322"/>
    </location>
</feature>
<feature type="active site" description="Nucleophile" evidence="1">
    <location>
        <position position="117"/>
    </location>
</feature>
<feature type="active site" description="Cysteine persulfide intermediate" evidence="1">
    <location>
        <position position="216"/>
    </location>
</feature>
<feature type="binding site" evidence="1">
    <location>
        <begin position="30"/>
        <end position="37"/>
    </location>
    <ligand>
        <name>ATP</name>
        <dbReference type="ChEBI" id="CHEBI:30616"/>
    </ligand>
</feature>
<feature type="binding site" evidence="1">
    <location>
        <position position="56"/>
    </location>
    <ligand>
        <name>ATP</name>
        <dbReference type="ChEBI" id="CHEBI:30616"/>
    </ligand>
</feature>
<feature type="binding site" evidence="1">
    <location>
        <position position="142"/>
    </location>
    <ligand>
        <name>ATP</name>
        <dbReference type="ChEBI" id="CHEBI:30616"/>
    </ligand>
</feature>
<feature type="site" description="Interaction with tRNA" evidence="1">
    <location>
        <position position="143"/>
    </location>
</feature>
<feature type="site" description="Interaction with tRNA" evidence="1">
    <location>
        <position position="364"/>
    </location>
</feature>
<feature type="disulfide bond" description="Alternate" evidence="1">
    <location>
        <begin position="117"/>
        <end position="216"/>
    </location>
</feature>
<comment type="function">
    <text evidence="1">Catalyzes the 2-thiolation of uridine at the wobble position (U34) of tRNA, leading to the formation of s(2)U34.</text>
</comment>
<comment type="catalytic activity">
    <reaction evidence="1">
        <text>S-sulfanyl-L-cysteinyl-[protein] + uridine(34) in tRNA + AH2 + ATP = 2-thiouridine(34) in tRNA + L-cysteinyl-[protein] + A + AMP + diphosphate + H(+)</text>
        <dbReference type="Rhea" id="RHEA:47032"/>
        <dbReference type="Rhea" id="RHEA-COMP:10131"/>
        <dbReference type="Rhea" id="RHEA-COMP:11726"/>
        <dbReference type="Rhea" id="RHEA-COMP:11727"/>
        <dbReference type="Rhea" id="RHEA-COMP:11728"/>
        <dbReference type="ChEBI" id="CHEBI:13193"/>
        <dbReference type="ChEBI" id="CHEBI:15378"/>
        <dbReference type="ChEBI" id="CHEBI:17499"/>
        <dbReference type="ChEBI" id="CHEBI:29950"/>
        <dbReference type="ChEBI" id="CHEBI:30616"/>
        <dbReference type="ChEBI" id="CHEBI:33019"/>
        <dbReference type="ChEBI" id="CHEBI:61963"/>
        <dbReference type="ChEBI" id="CHEBI:65315"/>
        <dbReference type="ChEBI" id="CHEBI:87170"/>
        <dbReference type="ChEBI" id="CHEBI:456215"/>
        <dbReference type="EC" id="2.8.1.13"/>
    </reaction>
</comment>
<comment type="subcellular location">
    <subcellularLocation>
        <location evidence="1">Cytoplasm</location>
    </subcellularLocation>
</comment>
<comment type="similarity">
    <text evidence="1">Belongs to the MnmA/TRMU family.</text>
</comment>
<proteinExistence type="inferred from homology"/>
<gene>
    <name evidence="1" type="primary">mnmA</name>
    <name type="ordered locus">Syncc9605_0877</name>
</gene>
<name>MNMA_SYNSC</name>
<reference key="1">
    <citation type="submission" date="2005-07" db="EMBL/GenBank/DDBJ databases">
        <title>Complete sequence of Synechococcus sp. CC9605.</title>
        <authorList>
            <consortium name="US DOE Joint Genome Institute"/>
            <person name="Copeland A."/>
            <person name="Lucas S."/>
            <person name="Lapidus A."/>
            <person name="Barry K."/>
            <person name="Detter J.C."/>
            <person name="Glavina T."/>
            <person name="Hammon N."/>
            <person name="Israni S."/>
            <person name="Pitluck S."/>
            <person name="Schmutz J."/>
            <person name="Martinez M."/>
            <person name="Larimer F."/>
            <person name="Land M."/>
            <person name="Kyrpides N."/>
            <person name="Ivanova N."/>
            <person name="Richardson P."/>
        </authorList>
    </citation>
    <scope>NUCLEOTIDE SEQUENCE [LARGE SCALE GENOMIC DNA]</scope>
    <source>
        <strain>CC9605</strain>
    </source>
</reference>
<dbReference type="EC" id="2.8.1.13" evidence="1"/>
<dbReference type="EMBL" id="CP000110">
    <property type="protein sequence ID" value="ABB34645.1"/>
    <property type="molecule type" value="Genomic_DNA"/>
</dbReference>
<dbReference type="RefSeq" id="WP_011363869.1">
    <property type="nucleotide sequence ID" value="NC_007516.1"/>
</dbReference>
<dbReference type="SMR" id="Q3AL87"/>
<dbReference type="STRING" id="110662.Syncc9605_0877"/>
<dbReference type="KEGG" id="syd:Syncc9605_0877"/>
<dbReference type="eggNOG" id="COG0482">
    <property type="taxonomic scope" value="Bacteria"/>
</dbReference>
<dbReference type="HOGENOM" id="CLU_035188_0_0_3"/>
<dbReference type="OrthoDB" id="9800696at2"/>
<dbReference type="GO" id="GO:0005737">
    <property type="term" value="C:cytoplasm"/>
    <property type="evidence" value="ECO:0007669"/>
    <property type="project" value="UniProtKB-SubCell"/>
</dbReference>
<dbReference type="GO" id="GO:0005524">
    <property type="term" value="F:ATP binding"/>
    <property type="evidence" value="ECO:0007669"/>
    <property type="project" value="UniProtKB-KW"/>
</dbReference>
<dbReference type="GO" id="GO:0000049">
    <property type="term" value="F:tRNA binding"/>
    <property type="evidence" value="ECO:0007669"/>
    <property type="project" value="UniProtKB-KW"/>
</dbReference>
<dbReference type="GO" id="GO:0103016">
    <property type="term" value="F:tRNA-uridine 2-sulfurtransferase activity"/>
    <property type="evidence" value="ECO:0007669"/>
    <property type="project" value="UniProtKB-EC"/>
</dbReference>
<dbReference type="GO" id="GO:0002143">
    <property type="term" value="P:tRNA wobble position uridine thiolation"/>
    <property type="evidence" value="ECO:0007669"/>
    <property type="project" value="TreeGrafter"/>
</dbReference>
<dbReference type="CDD" id="cd01998">
    <property type="entry name" value="MnmA_TRMU-like"/>
    <property type="match status" value="1"/>
</dbReference>
<dbReference type="FunFam" id="2.30.30.280:FF:000001">
    <property type="entry name" value="tRNA-specific 2-thiouridylase MnmA"/>
    <property type="match status" value="1"/>
</dbReference>
<dbReference type="Gene3D" id="2.30.30.280">
    <property type="entry name" value="Adenine nucleotide alpha hydrolases-like domains"/>
    <property type="match status" value="1"/>
</dbReference>
<dbReference type="Gene3D" id="3.40.50.620">
    <property type="entry name" value="HUPs"/>
    <property type="match status" value="1"/>
</dbReference>
<dbReference type="Gene3D" id="2.40.30.10">
    <property type="entry name" value="Translation factors"/>
    <property type="match status" value="1"/>
</dbReference>
<dbReference type="HAMAP" id="MF_00144">
    <property type="entry name" value="tRNA_thiouridyl_MnmA"/>
    <property type="match status" value="1"/>
</dbReference>
<dbReference type="InterPro" id="IPR004506">
    <property type="entry name" value="MnmA-like"/>
</dbReference>
<dbReference type="InterPro" id="IPR046885">
    <property type="entry name" value="MnmA-like_C"/>
</dbReference>
<dbReference type="InterPro" id="IPR046884">
    <property type="entry name" value="MnmA-like_central"/>
</dbReference>
<dbReference type="InterPro" id="IPR023382">
    <property type="entry name" value="MnmA-like_central_sf"/>
</dbReference>
<dbReference type="InterPro" id="IPR014729">
    <property type="entry name" value="Rossmann-like_a/b/a_fold"/>
</dbReference>
<dbReference type="NCBIfam" id="NF001138">
    <property type="entry name" value="PRK00143.1"/>
    <property type="match status" value="1"/>
</dbReference>
<dbReference type="NCBIfam" id="TIGR00420">
    <property type="entry name" value="trmU"/>
    <property type="match status" value="1"/>
</dbReference>
<dbReference type="PANTHER" id="PTHR11933:SF5">
    <property type="entry name" value="MITOCHONDRIAL TRNA-SPECIFIC 2-THIOURIDYLASE 1"/>
    <property type="match status" value="1"/>
</dbReference>
<dbReference type="PANTHER" id="PTHR11933">
    <property type="entry name" value="TRNA 5-METHYLAMINOMETHYL-2-THIOURIDYLATE -METHYLTRANSFERASE"/>
    <property type="match status" value="1"/>
</dbReference>
<dbReference type="Pfam" id="PF03054">
    <property type="entry name" value="tRNA_Me_trans"/>
    <property type="match status" value="1"/>
</dbReference>
<dbReference type="Pfam" id="PF20258">
    <property type="entry name" value="tRNA_Me_trans_C"/>
    <property type="match status" value="1"/>
</dbReference>
<dbReference type="Pfam" id="PF20259">
    <property type="entry name" value="tRNA_Me_trans_M"/>
    <property type="match status" value="1"/>
</dbReference>
<dbReference type="SUPFAM" id="SSF52402">
    <property type="entry name" value="Adenine nucleotide alpha hydrolases-like"/>
    <property type="match status" value="1"/>
</dbReference>
<organism>
    <name type="scientific">Synechococcus sp. (strain CC9605)</name>
    <dbReference type="NCBI Taxonomy" id="110662"/>
    <lineage>
        <taxon>Bacteria</taxon>
        <taxon>Bacillati</taxon>
        <taxon>Cyanobacteriota</taxon>
        <taxon>Cyanophyceae</taxon>
        <taxon>Synechococcales</taxon>
        <taxon>Synechococcaceae</taxon>
        <taxon>Synechococcus</taxon>
    </lineage>
</organism>
<accession>Q3AL87</accession>
<evidence type="ECO:0000255" key="1">
    <source>
        <dbReference type="HAMAP-Rule" id="MF_00144"/>
    </source>
</evidence>